<sequence length="560" mass="59783">MTPQKSDACSDPVYTVGDYLLDRLAELGVSEIFGVPGDYNLQFLDHIVAHPTIRWVGSANELNAGYAADGYGRLRGMSAVVTTFGVGELSVTNAIAGSYAEHVPVVHIVGGPTKDAQGTRRALHHSLGDGDFEHFLRISREITCAQANLMPATAGREIDRVLSEVREQKRPGYILLSSDVARFPTEPPAAPLPRYPGGTSPRALSLFTKAAIELIADHQLTVLADLLVHRLQAVKELEALLAADVVPHATLMWGKSLLDESSPNFLGIYAGAASAERVRAAIEGAPVLVTAGVVFTDMVSGFFSQRIDPARTIDIGQYQSSVADQVFAPLEMSAALQALATILTGRGISSPPVVPPPAEPPPAMPARDEPLTQQMVWDRVCSALTPGNVVLADQGTSFYGMADHRLPQGVTFIGQPLWGSIGYTLPAAVGAAVAHPDRRTVLLIGDGAAQLTVQELGTFSREGLSPVIVVVNNDGYTVERAIHGETAPYNDIVSWNWTELPSALGVTNHLAFRAQTYGQLDDALTVAAARRDRMVLVEVVLPRLEIPRLLGQLVGSMAPQ</sequence>
<feature type="chain" id="PRO_0000333746" description="Alpha-keto-acid decarboxylase">
    <location>
        <begin position="1"/>
        <end position="560"/>
    </location>
</feature>
<feature type="region of interest" description="Thiamine pyrophosphate binding" evidence="1">
    <location>
        <begin position="396"/>
        <end position="478"/>
    </location>
</feature>
<feature type="binding site" evidence="1">
    <location>
        <position position="61"/>
    </location>
    <ligand>
        <name>thiamine diphosphate</name>
        <dbReference type="ChEBI" id="CHEBI:58937"/>
    </ligand>
</feature>
<feature type="binding site" evidence="1">
    <location>
        <position position="446"/>
    </location>
    <ligand>
        <name>Mg(2+)</name>
        <dbReference type="ChEBI" id="CHEBI:18420"/>
    </ligand>
</feature>
<feature type="binding site" evidence="1">
    <location>
        <position position="473"/>
    </location>
    <ligand>
        <name>Mg(2+)</name>
        <dbReference type="ChEBI" id="CHEBI:18420"/>
    </ligand>
</feature>
<feature type="binding site" evidence="1">
    <location>
        <position position="475"/>
    </location>
    <ligand>
        <name>Mg(2+)</name>
        <dbReference type="ChEBI" id="CHEBI:18420"/>
    </ligand>
</feature>
<comment type="function">
    <text>Decarboxylates branched-chain and aromatic alpha-keto acids to aldehydes.</text>
</comment>
<comment type="cofactor">
    <cofactor evidence="1">
        <name>a metal cation</name>
        <dbReference type="ChEBI" id="CHEBI:25213"/>
    </cofactor>
    <text evidence="1">Binds 1 metal ion per subunit.</text>
</comment>
<comment type="cofactor">
    <cofactor evidence="1">
        <name>thiamine diphosphate</name>
        <dbReference type="ChEBI" id="CHEBI:58937"/>
    </cofactor>
    <text evidence="1">Binds 1 thiamine pyrophosphate per subunit.</text>
</comment>
<comment type="similarity">
    <text evidence="2">Belongs to the TPP enzyme family.</text>
</comment>
<accession>Q7U140</accession>
<accession>A0A1R3XX03</accession>
<accession>X2BGC9</accession>
<reference key="1">
    <citation type="journal article" date="2003" name="Proc. Natl. Acad. Sci. U.S.A.">
        <title>The complete genome sequence of Mycobacterium bovis.</title>
        <authorList>
            <person name="Garnier T."/>
            <person name="Eiglmeier K."/>
            <person name="Camus J.-C."/>
            <person name="Medina N."/>
            <person name="Mansoor H."/>
            <person name="Pryor M."/>
            <person name="Duthoy S."/>
            <person name="Grondin S."/>
            <person name="Lacroix C."/>
            <person name="Monsempe C."/>
            <person name="Simon S."/>
            <person name="Harris B."/>
            <person name="Atkin R."/>
            <person name="Doggett J."/>
            <person name="Mayes R."/>
            <person name="Keating L."/>
            <person name="Wheeler P.R."/>
            <person name="Parkhill J."/>
            <person name="Barrell B.G."/>
            <person name="Cole S.T."/>
            <person name="Gordon S.V."/>
            <person name="Hewinson R.G."/>
        </authorList>
    </citation>
    <scope>NUCLEOTIDE SEQUENCE [LARGE SCALE GENOMIC DNA]</scope>
    <source>
        <strain>ATCC BAA-935 / AF2122/97</strain>
    </source>
</reference>
<reference key="2">
    <citation type="journal article" date="2017" name="Genome Announc.">
        <title>Updated reference genome sequence and annotation of Mycobacterium bovis AF2122/97.</title>
        <authorList>
            <person name="Malone K.M."/>
            <person name="Farrell D."/>
            <person name="Stuber T.P."/>
            <person name="Schubert O.T."/>
            <person name="Aebersold R."/>
            <person name="Robbe-Austerman S."/>
            <person name="Gordon S.V."/>
        </authorList>
    </citation>
    <scope>NUCLEOTIDE SEQUENCE [LARGE SCALE GENOMIC DNA]</scope>
    <scope>GENOME REANNOTATION</scope>
    <source>
        <strain>ATCC BAA-935 / AF2122/97</strain>
    </source>
</reference>
<protein>
    <recommendedName>
        <fullName>Alpha-keto-acid decarboxylase</fullName>
        <shortName>KDC</shortName>
        <ecNumber>4.1.1.-</ecNumber>
    </recommendedName>
</protein>
<proteinExistence type="inferred from homology"/>
<organism>
    <name type="scientific">Mycobacterium bovis (strain ATCC BAA-935 / AF2122/97)</name>
    <dbReference type="NCBI Taxonomy" id="233413"/>
    <lineage>
        <taxon>Bacteria</taxon>
        <taxon>Bacillati</taxon>
        <taxon>Actinomycetota</taxon>
        <taxon>Actinomycetes</taxon>
        <taxon>Mycobacteriales</taxon>
        <taxon>Mycobacteriaceae</taxon>
        <taxon>Mycobacterium</taxon>
        <taxon>Mycobacterium tuberculosis complex</taxon>
    </lineage>
</organism>
<gene>
    <name type="primary">kdc</name>
    <name type="ordered locus">BQ2027_MB0876C</name>
</gene>
<dbReference type="EC" id="4.1.1.-"/>
<dbReference type="EMBL" id="LT708304">
    <property type="protein sequence ID" value="SIT99475.1"/>
    <property type="molecule type" value="Genomic_DNA"/>
</dbReference>
<dbReference type="RefSeq" id="NP_854534.1">
    <property type="nucleotide sequence ID" value="NC_002945.3"/>
</dbReference>
<dbReference type="SMR" id="Q7U140"/>
<dbReference type="KEGG" id="mbo:BQ2027_MB0876C"/>
<dbReference type="PATRIC" id="fig|233413.5.peg.955"/>
<dbReference type="Proteomes" id="UP000001419">
    <property type="component" value="Chromosome"/>
</dbReference>
<dbReference type="GO" id="GO:0005829">
    <property type="term" value="C:cytosol"/>
    <property type="evidence" value="ECO:0007669"/>
    <property type="project" value="TreeGrafter"/>
</dbReference>
<dbReference type="GO" id="GO:0000287">
    <property type="term" value="F:magnesium ion binding"/>
    <property type="evidence" value="ECO:0007669"/>
    <property type="project" value="InterPro"/>
</dbReference>
<dbReference type="GO" id="GO:0004737">
    <property type="term" value="F:pyruvate decarboxylase activity"/>
    <property type="evidence" value="ECO:0007669"/>
    <property type="project" value="TreeGrafter"/>
</dbReference>
<dbReference type="GO" id="GO:0030976">
    <property type="term" value="F:thiamine pyrophosphate binding"/>
    <property type="evidence" value="ECO:0007669"/>
    <property type="project" value="InterPro"/>
</dbReference>
<dbReference type="GO" id="GO:0000949">
    <property type="term" value="P:aromatic amino acid family catabolic process to alcohol via Ehrlich pathway"/>
    <property type="evidence" value="ECO:0007669"/>
    <property type="project" value="TreeGrafter"/>
</dbReference>
<dbReference type="CDD" id="cd02005">
    <property type="entry name" value="TPP_PDC_IPDC"/>
    <property type="match status" value="1"/>
</dbReference>
<dbReference type="CDD" id="cd07038">
    <property type="entry name" value="TPP_PYR_PDC_IPDC_like"/>
    <property type="match status" value="1"/>
</dbReference>
<dbReference type="FunFam" id="3.40.50.1220:FF:000042">
    <property type="entry name" value="Alpha-keto-acid decarboxylase"/>
    <property type="match status" value="1"/>
</dbReference>
<dbReference type="FunFam" id="3.40.50.970:FF:000019">
    <property type="entry name" value="Pyruvate decarboxylase isozyme"/>
    <property type="match status" value="1"/>
</dbReference>
<dbReference type="FunFam" id="3.40.50.970:FF:000024">
    <property type="entry name" value="Pyruvate decarboxylase isozyme"/>
    <property type="match status" value="1"/>
</dbReference>
<dbReference type="Gene3D" id="3.40.50.970">
    <property type="match status" value="2"/>
</dbReference>
<dbReference type="Gene3D" id="3.40.50.1220">
    <property type="entry name" value="TPP-binding domain"/>
    <property type="match status" value="1"/>
</dbReference>
<dbReference type="InterPro" id="IPR029035">
    <property type="entry name" value="DHS-like_NAD/FAD-binding_dom"/>
</dbReference>
<dbReference type="InterPro" id="IPR012110">
    <property type="entry name" value="PDC/IPDC-like"/>
</dbReference>
<dbReference type="InterPro" id="IPR029061">
    <property type="entry name" value="THDP-binding"/>
</dbReference>
<dbReference type="InterPro" id="IPR012000">
    <property type="entry name" value="Thiamin_PyroP_enz_cen_dom"/>
</dbReference>
<dbReference type="InterPro" id="IPR012001">
    <property type="entry name" value="Thiamin_PyroP_enz_TPP-bd_dom"/>
</dbReference>
<dbReference type="InterPro" id="IPR000399">
    <property type="entry name" value="TPP-bd_CS"/>
</dbReference>
<dbReference type="InterPro" id="IPR011766">
    <property type="entry name" value="TPP_enzyme_TPP-bd"/>
</dbReference>
<dbReference type="InterPro" id="IPR047214">
    <property type="entry name" value="TPP_PDC_IPDC"/>
</dbReference>
<dbReference type="InterPro" id="IPR047213">
    <property type="entry name" value="TPP_PYR_PDC_IPDC-like"/>
</dbReference>
<dbReference type="PANTHER" id="PTHR43452">
    <property type="entry name" value="PYRUVATE DECARBOXYLASE"/>
    <property type="match status" value="1"/>
</dbReference>
<dbReference type="PANTHER" id="PTHR43452:SF30">
    <property type="entry name" value="PYRUVATE DECARBOXYLASE ISOZYME 1-RELATED"/>
    <property type="match status" value="1"/>
</dbReference>
<dbReference type="Pfam" id="PF02775">
    <property type="entry name" value="TPP_enzyme_C"/>
    <property type="match status" value="1"/>
</dbReference>
<dbReference type="Pfam" id="PF00205">
    <property type="entry name" value="TPP_enzyme_M"/>
    <property type="match status" value="1"/>
</dbReference>
<dbReference type="Pfam" id="PF02776">
    <property type="entry name" value="TPP_enzyme_N"/>
    <property type="match status" value="1"/>
</dbReference>
<dbReference type="PIRSF" id="PIRSF036565">
    <property type="entry name" value="Pyruvt_ip_decrb"/>
    <property type="match status" value="1"/>
</dbReference>
<dbReference type="SUPFAM" id="SSF52467">
    <property type="entry name" value="DHS-like NAD/FAD-binding domain"/>
    <property type="match status" value="1"/>
</dbReference>
<dbReference type="SUPFAM" id="SSF52518">
    <property type="entry name" value="Thiamin diphosphate-binding fold (THDP-binding)"/>
    <property type="match status" value="2"/>
</dbReference>
<dbReference type="PROSITE" id="PS00187">
    <property type="entry name" value="TPP_ENZYMES"/>
    <property type="match status" value="1"/>
</dbReference>
<evidence type="ECO:0000250" key="1"/>
<evidence type="ECO:0000305" key="2"/>
<keyword id="KW-0210">Decarboxylase</keyword>
<keyword id="KW-0456">Lyase</keyword>
<keyword id="KW-0460">Magnesium</keyword>
<keyword id="KW-0479">Metal-binding</keyword>
<keyword id="KW-1185">Reference proteome</keyword>
<keyword id="KW-0786">Thiamine pyrophosphate</keyword>
<name>KDC_MYCBO</name>